<sequence>MASRDFLRVFGAGEGAGPPGDAGAGQPDDDELSLGLSLGGRFGTDAKRPRLARSSSIASVCSVSSLHADPSPAAPLPLLRTTSLPTETEEERWRRREMQSRRRLEARRKRVERRNSMGSVSVAPADAVSGRRSNASQGSNSASTTEQGIGGSMFNQSADAKSPSTSDNRNQNDMLPPTKAAEKPLNGTATEQQPRLRTLGSLTTRTGSTSDIRKLMMEDMPMVSSKVEGPNARRIDGFLYRYKKGEDVRIVCVCHGSFLTPAEFVKHAGGGDVPNPLRHIVVNPAPFS</sequence>
<feature type="chain" id="PRO_0000369624" description="Ninja-family protein 6">
    <location>
        <begin position="1"/>
        <end position="288"/>
    </location>
</feature>
<feature type="region of interest" description="Disordered" evidence="2">
    <location>
        <begin position="1"/>
        <end position="50"/>
    </location>
</feature>
<feature type="region of interest" description="Disordered" evidence="2">
    <location>
        <begin position="66"/>
        <end position="207"/>
    </location>
</feature>
<feature type="compositionally biased region" description="Gly residues" evidence="2">
    <location>
        <begin position="12"/>
        <end position="23"/>
    </location>
</feature>
<feature type="compositionally biased region" description="Low complexity" evidence="2">
    <location>
        <begin position="76"/>
        <end position="86"/>
    </location>
</feature>
<feature type="compositionally biased region" description="Basic and acidic residues" evidence="2">
    <location>
        <begin position="91"/>
        <end position="103"/>
    </location>
</feature>
<feature type="compositionally biased region" description="Polar residues" evidence="2">
    <location>
        <begin position="131"/>
        <end position="173"/>
    </location>
</feature>
<feature type="compositionally biased region" description="Low complexity" evidence="2">
    <location>
        <begin position="195"/>
        <end position="207"/>
    </location>
</feature>
<reference key="1">
    <citation type="journal article" date="2009" name="Plant Mol. Biol.">
        <title>Insights into corn genes derived from large-scale cDNA sequencing.</title>
        <authorList>
            <person name="Alexandrov N.N."/>
            <person name="Brover V.V."/>
            <person name="Freidin S."/>
            <person name="Troukhan M.E."/>
            <person name="Tatarinova T.V."/>
            <person name="Zhang H."/>
            <person name="Swaller T.J."/>
            <person name="Lu Y.-P."/>
            <person name="Bouck J."/>
            <person name="Flavell R.B."/>
            <person name="Feldmann K.A."/>
        </authorList>
    </citation>
    <scope>NUCLEOTIDE SEQUENCE [LARGE SCALE MRNA]</scope>
</reference>
<evidence type="ECO:0000250" key="1"/>
<evidence type="ECO:0000256" key="2">
    <source>
        <dbReference type="SAM" id="MobiDB-lite"/>
    </source>
</evidence>
<evidence type="ECO:0000305" key="3"/>
<organism>
    <name type="scientific">Zea mays</name>
    <name type="common">Maize</name>
    <dbReference type="NCBI Taxonomy" id="4577"/>
    <lineage>
        <taxon>Eukaryota</taxon>
        <taxon>Viridiplantae</taxon>
        <taxon>Streptophyta</taxon>
        <taxon>Embryophyta</taxon>
        <taxon>Tracheophyta</taxon>
        <taxon>Spermatophyta</taxon>
        <taxon>Magnoliopsida</taxon>
        <taxon>Liliopsida</taxon>
        <taxon>Poales</taxon>
        <taxon>Poaceae</taxon>
        <taxon>PACMAD clade</taxon>
        <taxon>Panicoideae</taxon>
        <taxon>Andropogonodae</taxon>
        <taxon>Andropogoneae</taxon>
        <taxon>Tripsacinae</taxon>
        <taxon>Zea</taxon>
    </lineage>
</organism>
<proteinExistence type="evidence at transcript level"/>
<name>NNJA6_MAIZE</name>
<accession>B6TNQ7</accession>
<keyword id="KW-0539">Nucleus</keyword>
<keyword id="KW-1185">Reference proteome</keyword>
<protein>
    <recommendedName>
        <fullName>Ninja-family protein 6</fullName>
    </recommendedName>
</protein>
<dbReference type="EMBL" id="EU966622">
    <property type="protein sequence ID" value="ACG38740.1"/>
    <property type="molecule type" value="mRNA"/>
</dbReference>
<dbReference type="RefSeq" id="NP_001150339.1">
    <property type="nucleotide sequence ID" value="NM_001156867.2"/>
</dbReference>
<dbReference type="FunCoup" id="B6TNQ7">
    <property type="interactions" value="1254"/>
</dbReference>
<dbReference type="STRING" id="4577.B6TNQ7"/>
<dbReference type="PaxDb" id="4577-GRMZM2G053831_P01"/>
<dbReference type="EnsemblPlants" id="Zm00001eb393150_T001">
    <property type="protein sequence ID" value="Zm00001eb393150_P001"/>
    <property type="gene ID" value="Zm00001eb393150"/>
</dbReference>
<dbReference type="GeneID" id="100283969"/>
<dbReference type="Gramene" id="Zm00001eb393150_T001">
    <property type="protein sequence ID" value="Zm00001eb393150_P001"/>
    <property type="gene ID" value="Zm00001eb393150"/>
</dbReference>
<dbReference type="KEGG" id="zma:100283969"/>
<dbReference type="eggNOG" id="ENOG502QW6K">
    <property type="taxonomic scope" value="Eukaryota"/>
</dbReference>
<dbReference type="HOGENOM" id="CLU_034695_0_0_1"/>
<dbReference type="InParanoid" id="B6TNQ7"/>
<dbReference type="OMA" id="DKKEEGW"/>
<dbReference type="OrthoDB" id="667358at2759"/>
<dbReference type="Proteomes" id="UP000007305">
    <property type="component" value="Chromosome 9"/>
</dbReference>
<dbReference type="ExpressionAtlas" id="B6TNQ7">
    <property type="expression patterns" value="baseline and differential"/>
</dbReference>
<dbReference type="GO" id="GO:0005634">
    <property type="term" value="C:nucleus"/>
    <property type="evidence" value="ECO:0000318"/>
    <property type="project" value="GO_Central"/>
</dbReference>
<dbReference type="GO" id="GO:0045892">
    <property type="term" value="P:negative regulation of DNA-templated transcription"/>
    <property type="evidence" value="ECO:0000318"/>
    <property type="project" value="GO_Central"/>
</dbReference>
<dbReference type="GO" id="GO:0007165">
    <property type="term" value="P:signal transduction"/>
    <property type="evidence" value="ECO:0007669"/>
    <property type="project" value="InterPro"/>
</dbReference>
<dbReference type="InterPro" id="IPR031307">
    <property type="entry name" value="Ninja_fam"/>
</dbReference>
<dbReference type="InterPro" id="IPR012463">
    <property type="entry name" value="Ninja_motif"/>
</dbReference>
<dbReference type="InterPro" id="IPR032310">
    <property type="entry name" value="NLS_NINJA_AFP-like"/>
</dbReference>
<dbReference type="InterPro" id="IPR032308">
    <property type="entry name" value="TDBD"/>
</dbReference>
<dbReference type="PANTHER" id="PTHR31413">
    <property type="entry name" value="AFP HOMOLOG 2"/>
    <property type="match status" value="1"/>
</dbReference>
<dbReference type="PANTHER" id="PTHR31413:SF9">
    <property type="entry name" value="NINJA-FAMILY PROTEIN OS03G0419100"/>
    <property type="match status" value="1"/>
</dbReference>
<dbReference type="Pfam" id="PF07897">
    <property type="entry name" value="EAR"/>
    <property type="match status" value="1"/>
</dbReference>
<dbReference type="Pfam" id="PF16136">
    <property type="entry name" value="NLS_NINJA_AFP"/>
    <property type="match status" value="1"/>
</dbReference>
<dbReference type="Pfam" id="PF16135">
    <property type="entry name" value="TDBD"/>
    <property type="match status" value="1"/>
</dbReference>
<comment type="subcellular location">
    <subcellularLocation>
        <location evidence="1">Nucleus</location>
    </subcellularLocation>
</comment>
<comment type="similarity">
    <text evidence="3">Belongs to the Ninja family.</text>
</comment>